<gene>
    <name evidence="1" type="primary">dapA1</name>
    <name type="ordered locus">BH1742</name>
</gene>
<protein>
    <recommendedName>
        <fullName evidence="1">4-hydroxy-tetrahydrodipicolinate synthase 1</fullName>
        <shortName evidence="1">HTPA synthase 1</shortName>
        <ecNumber evidence="1">4.3.3.7</ecNumber>
    </recommendedName>
</protein>
<reference key="1">
    <citation type="journal article" date="2000" name="Nucleic Acids Res.">
        <title>Complete genome sequence of the alkaliphilic bacterium Bacillus halodurans and genomic sequence comparison with Bacillus subtilis.</title>
        <authorList>
            <person name="Takami H."/>
            <person name="Nakasone K."/>
            <person name="Takaki Y."/>
            <person name="Maeno G."/>
            <person name="Sasaki R."/>
            <person name="Masui N."/>
            <person name="Fuji F."/>
            <person name="Hirama C."/>
            <person name="Nakamura Y."/>
            <person name="Ogasawara N."/>
            <person name="Kuhara S."/>
            <person name="Horikoshi K."/>
        </authorList>
    </citation>
    <scope>NUCLEOTIDE SEQUENCE [LARGE SCALE GENOMIC DNA]</scope>
    <source>
        <strain>ATCC BAA-125 / DSM 18197 / FERM 7344 / JCM 9153 / C-125</strain>
    </source>
</reference>
<name>DAPA1_HALH5</name>
<accession>Q9KC32</accession>
<comment type="function">
    <text evidence="1">Catalyzes the condensation of (S)-aspartate-beta-semialdehyde [(S)-ASA] and pyruvate to 4-hydroxy-tetrahydrodipicolinate (HTPA).</text>
</comment>
<comment type="catalytic activity">
    <reaction evidence="1">
        <text>L-aspartate 4-semialdehyde + pyruvate = (2S,4S)-4-hydroxy-2,3,4,5-tetrahydrodipicolinate + H2O + H(+)</text>
        <dbReference type="Rhea" id="RHEA:34171"/>
        <dbReference type="ChEBI" id="CHEBI:15361"/>
        <dbReference type="ChEBI" id="CHEBI:15377"/>
        <dbReference type="ChEBI" id="CHEBI:15378"/>
        <dbReference type="ChEBI" id="CHEBI:67139"/>
        <dbReference type="ChEBI" id="CHEBI:537519"/>
        <dbReference type="EC" id="4.3.3.7"/>
    </reaction>
</comment>
<comment type="pathway">
    <text evidence="1">Amino-acid biosynthesis; L-lysine biosynthesis via DAP pathway; (S)-tetrahydrodipicolinate from L-aspartate: step 3/4.</text>
</comment>
<comment type="subunit">
    <text evidence="1">Homotetramer; dimer of dimers.</text>
</comment>
<comment type="subcellular location">
    <subcellularLocation>
        <location evidence="1">Cytoplasm</location>
    </subcellularLocation>
</comment>
<comment type="similarity">
    <text evidence="1">Belongs to the DapA family.</text>
</comment>
<comment type="caution">
    <text evidence="2">Was originally thought to be a dihydrodipicolinate synthase (DHDPS), catalyzing the condensation of (S)-aspartate-beta-semialdehyde [(S)-ASA] and pyruvate to dihydrodipicolinate (DHDP). However, it was shown in E.coli that the product of the enzymatic reaction is not dihydrodipicolinate but in fact (4S)-4-hydroxy-2,3,4,5-tetrahydro-(2S)-dipicolinic acid (HTPA), and that the consecutive dehydration reaction leading to DHDP is not spontaneous but catalyzed by DapB.</text>
</comment>
<evidence type="ECO:0000255" key="1">
    <source>
        <dbReference type="HAMAP-Rule" id="MF_00418"/>
    </source>
</evidence>
<evidence type="ECO:0000305" key="2"/>
<dbReference type="EC" id="4.3.3.7" evidence="1"/>
<dbReference type="EMBL" id="BA000004">
    <property type="protein sequence ID" value="BAB05461.1"/>
    <property type="molecule type" value="Genomic_DNA"/>
</dbReference>
<dbReference type="PIR" id="F83867">
    <property type="entry name" value="F83867"/>
</dbReference>
<dbReference type="RefSeq" id="WP_010897903.1">
    <property type="nucleotide sequence ID" value="NC_002570.2"/>
</dbReference>
<dbReference type="SMR" id="Q9KC32"/>
<dbReference type="STRING" id="272558.gene:10727640"/>
<dbReference type="GeneID" id="87597356"/>
<dbReference type="KEGG" id="bha:BH1742"/>
<dbReference type="eggNOG" id="COG0329">
    <property type="taxonomic scope" value="Bacteria"/>
</dbReference>
<dbReference type="HOGENOM" id="CLU_049343_7_1_9"/>
<dbReference type="OrthoDB" id="9782828at2"/>
<dbReference type="UniPathway" id="UPA00034">
    <property type="reaction ID" value="UER00017"/>
</dbReference>
<dbReference type="Proteomes" id="UP000001258">
    <property type="component" value="Chromosome"/>
</dbReference>
<dbReference type="GO" id="GO:0005829">
    <property type="term" value="C:cytosol"/>
    <property type="evidence" value="ECO:0007669"/>
    <property type="project" value="TreeGrafter"/>
</dbReference>
<dbReference type="GO" id="GO:0008840">
    <property type="term" value="F:4-hydroxy-tetrahydrodipicolinate synthase activity"/>
    <property type="evidence" value="ECO:0007669"/>
    <property type="project" value="UniProtKB-UniRule"/>
</dbReference>
<dbReference type="GO" id="GO:0019877">
    <property type="term" value="P:diaminopimelate biosynthetic process"/>
    <property type="evidence" value="ECO:0007669"/>
    <property type="project" value="UniProtKB-UniRule"/>
</dbReference>
<dbReference type="GO" id="GO:0009089">
    <property type="term" value="P:lysine biosynthetic process via diaminopimelate"/>
    <property type="evidence" value="ECO:0007669"/>
    <property type="project" value="UniProtKB-UniRule"/>
</dbReference>
<dbReference type="CDD" id="cd00950">
    <property type="entry name" value="DHDPS"/>
    <property type="match status" value="1"/>
</dbReference>
<dbReference type="Gene3D" id="3.20.20.70">
    <property type="entry name" value="Aldolase class I"/>
    <property type="match status" value="1"/>
</dbReference>
<dbReference type="HAMAP" id="MF_00418">
    <property type="entry name" value="DapA"/>
    <property type="match status" value="1"/>
</dbReference>
<dbReference type="InterPro" id="IPR013785">
    <property type="entry name" value="Aldolase_TIM"/>
</dbReference>
<dbReference type="InterPro" id="IPR005263">
    <property type="entry name" value="DapA"/>
</dbReference>
<dbReference type="InterPro" id="IPR002220">
    <property type="entry name" value="DapA-like"/>
</dbReference>
<dbReference type="InterPro" id="IPR020625">
    <property type="entry name" value="Schiff_base-form_aldolases_AS"/>
</dbReference>
<dbReference type="InterPro" id="IPR020624">
    <property type="entry name" value="Schiff_base-form_aldolases_CS"/>
</dbReference>
<dbReference type="NCBIfam" id="TIGR00674">
    <property type="entry name" value="dapA"/>
    <property type="match status" value="1"/>
</dbReference>
<dbReference type="PANTHER" id="PTHR12128:SF66">
    <property type="entry name" value="4-HYDROXY-2-OXOGLUTARATE ALDOLASE, MITOCHONDRIAL"/>
    <property type="match status" value="1"/>
</dbReference>
<dbReference type="PANTHER" id="PTHR12128">
    <property type="entry name" value="DIHYDRODIPICOLINATE SYNTHASE"/>
    <property type="match status" value="1"/>
</dbReference>
<dbReference type="Pfam" id="PF00701">
    <property type="entry name" value="DHDPS"/>
    <property type="match status" value="1"/>
</dbReference>
<dbReference type="PIRSF" id="PIRSF001365">
    <property type="entry name" value="DHDPS"/>
    <property type="match status" value="1"/>
</dbReference>
<dbReference type="PRINTS" id="PR00146">
    <property type="entry name" value="DHPICSNTHASE"/>
</dbReference>
<dbReference type="SMART" id="SM01130">
    <property type="entry name" value="DHDPS"/>
    <property type="match status" value="1"/>
</dbReference>
<dbReference type="SUPFAM" id="SSF51569">
    <property type="entry name" value="Aldolase"/>
    <property type="match status" value="1"/>
</dbReference>
<dbReference type="PROSITE" id="PS00665">
    <property type="entry name" value="DHDPS_1"/>
    <property type="match status" value="1"/>
</dbReference>
<dbReference type="PROSITE" id="PS00666">
    <property type="entry name" value="DHDPS_2"/>
    <property type="match status" value="1"/>
</dbReference>
<keyword id="KW-0028">Amino-acid biosynthesis</keyword>
<keyword id="KW-0963">Cytoplasm</keyword>
<keyword id="KW-0220">Diaminopimelate biosynthesis</keyword>
<keyword id="KW-0456">Lyase</keyword>
<keyword id="KW-0457">Lysine biosynthesis</keyword>
<keyword id="KW-1185">Reference proteome</keyword>
<keyword id="KW-0704">Schiff base</keyword>
<feature type="chain" id="PRO_0000103082" description="4-hydroxy-tetrahydrodipicolinate synthase 1">
    <location>
        <begin position="1"/>
        <end position="295"/>
    </location>
</feature>
<feature type="active site" description="Proton donor/acceptor" evidence="1">
    <location>
        <position position="134"/>
    </location>
</feature>
<feature type="active site" description="Schiff-base intermediate with substrate" evidence="1">
    <location>
        <position position="162"/>
    </location>
</feature>
<feature type="binding site" evidence="1">
    <location>
        <position position="46"/>
    </location>
    <ligand>
        <name>pyruvate</name>
        <dbReference type="ChEBI" id="CHEBI:15361"/>
    </ligand>
</feature>
<feature type="binding site" evidence="1">
    <location>
        <position position="204"/>
    </location>
    <ligand>
        <name>pyruvate</name>
        <dbReference type="ChEBI" id="CHEBI:15361"/>
    </ligand>
</feature>
<feature type="site" description="Part of a proton relay during catalysis" evidence="1">
    <location>
        <position position="45"/>
    </location>
</feature>
<feature type="site" description="Part of a proton relay during catalysis" evidence="1">
    <location>
        <position position="108"/>
    </location>
</feature>
<proteinExistence type="inferred from homology"/>
<organism>
    <name type="scientific">Halalkalibacterium halodurans (strain ATCC BAA-125 / DSM 18197 / FERM 7344 / JCM 9153 / C-125)</name>
    <name type="common">Bacillus halodurans</name>
    <dbReference type="NCBI Taxonomy" id="272558"/>
    <lineage>
        <taxon>Bacteria</taxon>
        <taxon>Bacillati</taxon>
        <taxon>Bacillota</taxon>
        <taxon>Bacilli</taxon>
        <taxon>Bacillales</taxon>
        <taxon>Bacillaceae</taxon>
        <taxon>Halalkalibacterium (ex Joshi et al. 2022)</taxon>
    </lineage>
</organism>
<sequence length="295" mass="31643">MNIGRIVTAMVTPFNEQDQVNLEATCQLVNELIANGSDALVVGGTTGESPTLTTDEKMALFHTVVEAAGGRVPVIAGTGSNNTRASIELSKKVEDLGVDGIMLVTPYYNKPSQEGLFQHFKAISESTSLPIMLYNIPGRSGVNLDAETTLRLAELRNIVSIKEASGNLDQIAEIIEHSPADFSVYSGDDSLTLPLLSIGGTGVVSVASHIIGNEMQEMVQLFLSGQVERAAAIHRKLLPLMKTLFMTPNPTAVKAALELKGLPVGHVRLPLVPLTAEEQRQLELAINPQFNMFVS</sequence>